<proteinExistence type="inferred from homology"/>
<evidence type="ECO:0000250" key="1"/>
<evidence type="ECO:0000255" key="2"/>
<evidence type="ECO:0000255" key="3">
    <source>
        <dbReference type="PROSITE-ProRule" id="PRU01359"/>
    </source>
</evidence>
<evidence type="ECO:0000256" key="4">
    <source>
        <dbReference type="SAM" id="MobiDB-lite"/>
    </source>
</evidence>
<evidence type="ECO:0000305" key="5"/>
<feature type="chain" id="PRO_0000196203" description="Protein TonB">
    <location>
        <begin position="1"/>
        <end position="280"/>
    </location>
</feature>
<feature type="topological domain" description="Cytoplasmic" evidence="2">
    <location>
        <begin position="1"/>
        <end position="5"/>
    </location>
</feature>
<feature type="transmembrane region" description="Helical; Signal-anchor" evidence="2">
    <location>
        <begin position="6"/>
        <end position="27"/>
    </location>
</feature>
<feature type="topological domain" description="Periplasmic" evidence="2">
    <location>
        <begin position="28"/>
        <end position="280"/>
    </location>
</feature>
<feature type="domain" description="TonB C-terminal" evidence="3">
    <location>
        <begin position="196"/>
        <end position="280"/>
    </location>
</feature>
<feature type="region of interest" description="Disordered" evidence="4">
    <location>
        <begin position="51"/>
        <end position="217"/>
    </location>
</feature>
<feature type="compositionally biased region" description="Pro residues" evidence="4">
    <location>
        <begin position="64"/>
        <end position="83"/>
    </location>
</feature>
<feature type="compositionally biased region" description="Basic and acidic residues" evidence="4">
    <location>
        <begin position="90"/>
        <end position="143"/>
    </location>
</feature>
<feature type="compositionally biased region" description="Gly residues" evidence="4">
    <location>
        <begin position="165"/>
        <end position="184"/>
    </location>
</feature>
<comment type="function">
    <text>Interacts with outer membrane receptor proteins that carry out high-affinity binding and energy dependent uptake into the periplasmic space of specific substrates. It could act to transduce energy from the cytoplasmic membrane to specific energy-requiring processes in the outer membrane, resulting in the release into the periplasm of ligands bound by these outer membrane proteins. Required for heme utilization and virulence.</text>
</comment>
<comment type="subunit">
    <text evidence="1">The accessory proteins ExbB and ExbD seem to form a complex with TonB.</text>
</comment>
<comment type="subcellular location">
    <subcellularLocation>
        <location evidence="1">Cell inner membrane</location>
        <topology evidence="1">Single-pass membrane protein</topology>
        <orientation evidence="1">Periplasmic side</orientation>
    </subcellularLocation>
</comment>
<comment type="similarity">
    <text evidence="5">Belongs to the TonB family.</text>
</comment>
<organism>
    <name type="scientific">Neisseria meningitidis serogroup B (strain ATCC BAA-335 / MC58)</name>
    <dbReference type="NCBI Taxonomy" id="122586"/>
    <lineage>
        <taxon>Bacteria</taxon>
        <taxon>Pseudomonadati</taxon>
        <taxon>Pseudomonadota</taxon>
        <taxon>Betaproteobacteria</taxon>
        <taxon>Neisseriales</taxon>
        <taxon>Neisseriaceae</taxon>
        <taxon>Neisseria</taxon>
    </lineage>
</organism>
<keyword id="KW-0997">Cell inner membrane</keyword>
<keyword id="KW-1003">Cell membrane</keyword>
<keyword id="KW-0472">Membrane</keyword>
<keyword id="KW-0653">Protein transport</keyword>
<keyword id="KW-1185">Reference proteome</keyword>
<keyword id="KW-0735">Signal-anchor</keyword>
<keyword id="KW-0812">Transmembrane</keyword>
<keyword id="KW-1133">Transmembrane helix</keyword>
<keyword id="KW-0813">Transport</keyword>
<keyword id="KW-0843">Virulence</keyword>
<accession>P57004</accession>
<name>TONB_NEIMB</name>
<gene>
    <name type="primary">tonB</name>
    <name type="ordered locus">NMB1730</name>
</gene>
<sequence>MDKERILTPAVVFSVALLHLAMVALLWQAHKLPVIESGNVIEFVDLGDFGGGDGAPEGAGAPAAPEPQPVPEPPKPVEPPKPVLKPVVTKKADADIQQPKEEPKPEEKPKPEEKPKPEPKPEAKPVPKPAEKPVEKPSEKPAEHPGNASAKADSEQGNGEDKGTGTKGDGTGRGEGSGKGSGGVKGEHGEGAGSSKGNPLRANGSIPRPAYPTLSMENDEQGTVVLSVLVSPGGHVESVKIVKSSGFSRLDNAARKAAQNGHFQANAWTEFKVPVKFELN</sequence>
<dbReference type="EMBL" id="AE002098">
    <property type="protein sequence ID" value="AAF42075.1"/>
    <property type="molecule type" value="Genomic_DNA"/>
</dbReference>
<dbReference type="PIR" id="A81049">
    <property type="entry name" value="A81049"/>
</dbReference>
<dbReference type="RefSeq" id="NP_274733.1">
    <property type="nucleotide sequence ID" value="NC_003112.2"/>
</dbReference>
<dbReference type="RefSeq" id="WP_002212590.1">
    <property type="nucleotide sequence ID" value="NC_003112.2"/>
</dbReference>
<dbReference type="SMR" id="P57004"/>
<dbReference type="STRING" id="122586.NMB1730"/>
<dbReference type="PaxDb" id="122586-NMB1730"/>
<dbReference type="KEGG" id="nme:NMB1730"/>
<dbReference type="PATRIC" id="fig|122586.8.peg.2217"/>
<dbReference type="HOGENOM" id="CLU_899630_0_0_4"/>
<dbReference type="InParanoid" id="P57004"/>
<dbReference type="OrthoDB" id="8607379at2"/>
<dbReference type="Proteomes" id="UP000000425">
    <property type="component" value="Chromosome"/>
</dbReference>
<dbReference type="GO" id="GO:0030288">
    <property type="term" value="C:outer membrane-bounded periplasmic space"/>
    <property type="evidence" value="ECO:0007669"/>
    <property type="project" value="InterPro"/>
</dbReference>
<dbReference type="GO" id="GO:0098797">
    <property type="term" value="C:plasma membrane protein complex"/>
    <property type="evidence" value="ECO:0000318"/>
    <property type="project" value="GO_Central"/>
</dbReference>
<dbReference type="GO" id="GO:0031992">
    <property type="term" value="F:energy transducer activity"/>
    <property type="evidence" value="ECO:0000318"/>
    <property type="project" value="GO_Central"/>
</dbReference>
<dbReference type="GO" id="GO:0015031">
    <property type="term" value="P:protein transport"/>
    <property type="evidence" value="ECO:0007669"/>
    <property type="project" value="UniProtKB-KW"/>
</dbReference>
<dbReference type="GO" id="GO:0015891">
    <property type="term" value="P:siderophore transport"/>
    <property type="evidence" value="ECO:0007669"/>
    <property type="project" value="InterPro"/>
</dbReference>
<dbReference type="GO" id="GO:0055085">
    <property type="term" value="P:transmembrane transport"/>
    <property type="evidence" value="ECO:0007669"/>
    <property type="project" value="InterPro"/>
</dbReference>
<dbReference type="FunFam" id="3.30.1150.10:FF:000009">
    <property type="entry name" value="Protein TonB"/>
    <property type="match status" value="1"/>
</dbReference>
<dbReference type="Gene3D" id="3.30.1150.10">
    <property type="match status" value="1"/>
</dbReference>
<dbReference type="InterPro" id="IPR003538">
    <property type="entry name" value="TonB"/>
</dbReference>
<dbReference type="InterPro" id="IPR051045">
    <property type="entry name" value="TonB-dependent_transducer"/>
</dbReference>
<dbReference type="InterPro" id="IPR006260">
    <property type="entry name" value="TonB/TolA_C"/>
</dbReference>
<dbReference type="InterPro" id="IPR037682">
    <property type="entry name" value="TonB_C"/>
</dbReference>
<dbReference type="NCBIfam" id="TIGR01352">
    <property type="entry name" value="tonB_Cterm"/>
    <property type="match status" value="1"/>
</dbReference>
<dbReference type="PANTHER" id="PTHR33446:SF2">
    <property type="entry name" value="PROTEIN TONB"/>
    <property type="match status" value="1"/>
</dbReference>
<dbReference type="PANTHER" id="PTHR33446">
    <property type="entry name" value="PROTEIN TONB-RELATED"/>
    <property type="match status" value="1"/>
</dbReference>
<dbReference type="Pfam" id="PF03544">
    <property type="entry name" value="TonB_C"/>
    <property type="match status" value="1"/>
</dbReference>
<dbReference type="PRINTS" id="PR01374">
    <property type="entry name" value="TONBPROTEIN"/>
</dbReference>
<dbReference type="SUPFAM" id="SSF74653">
    <property type="entry name" value="TolA/TonB C-terminal domain"/>
    <property type="match status" value="1"/>
</dbReference>
<dbReference type="PROSITE" id="PS52015">
    <property type="entry name" value="TONB_CTD"/>
    <property type="match status" value="1"/>
</dbReference>
<protein>
    <recommendedName>
        <fullName>Protein TonB</fullName>
    </recommendedName>
</protein>
<reference key="1">
    <citation type="journal article" date="2000" name="Science">
        <title>Complete genome sequence of Neisseria meningitidis serogroup B strain MC58.</title>
        <authorList>
            <person name="Tettelin H."/>
            <person name="Saunders N.J."/>
            <person name="Heidelberg J.F."/>
            <person name="Jeffries A.C."/>
            <person name="Nelson K.E."/>
            <person name="Eisen J.A."/>
            <person name="Ketchum K.A."/>
            <person name="Hood D.W."/>
            <person name="Peden J.F."/>
            <person name="Dodson R.J."/>
            <person name="Nelson W.C."/>
            <person name="Gwinn M.L."/>
            <person name="DeBoy R.T."/>
            <person name="Peterson J.D."/>
            <person name="Hickey E.K."/>
            <person name="Haft D.H."/>
            <person name="Salzberg S.L."/>
            <person name="White O."/>
            <person name="Fleischmann R.D."/>
            <person name="Dougherty B.A."/>
            <person name="Mason T.M."/>
            <person name="Ciecko A."/>
            <person name="Parksey D.S."/>
            <person name="Blair E."/>
            <person name="Cittone H."/>
            <person name="Clark E.B."/>
            <person name="Cotton M.D."/>
            <person name="Utterback T.R."/>
            <person name="Khouri H.M."/>
            <person name="Qin H."/>
            <person name="Vamathevan J.J."/>
            <person name="Gill J."/>
            <person name="Scarlato V."/>
            <person name="Masignani V."/>
            <person name="Pizza M."/>
            <person name="Grandi G."/>
            <person name="Sun L."/>
            <person name="Smith H.O."/>
            <person name="Fraser C.M."/>
            <person name="Moxon E.R."/>
            <person name="Rappuoli R."/>
            <person name="Venter J.C."/>
        </authorList>
    </citation>
    <scope>NUCLEOTIDE SEQUENCE [LARGE SCALE GENOMIC DNA]</scope>
    <source>
        <strain>ATCC BAA-335 / MC58</strain>
    </source>
</reference>